<proteinExistence type="evidence at protein level"/>
<comment type="function">
    <text evidence="1 2">Voltage-gated ion channel responsible for the resting Na(+) permeability that controls neuronal excitability. NALCN channel functions as a multi-protein complex, which consists at least of NALCN, NALF1, UNC79 and UNC80. NALCN is the voltage-sensing, pore-forming subunit of the NALCN channel complex. NALCN channel complex is constitutively active and conducts monovalent cations but is blocked by physiological concentrations of extracellular divalent cations (By similarity). In addition to its role in regulating neuronal excitability, is required for normal respiratory rhythm, systemic osmoregulation by controlling the serum sodium concentration and in the regulation of the intestinal pace-making activity in the interstitial cells of Cajal. NALCN channel is also activated by neuropeptides such as neurotensin and substance P (SP) through a SRC family kinases-dependent pathway. In addition, NALCN activity is enhanced/modulated by several GPCRs, such as CHRM3 (By similarity).</text>
</comment>
<comment type="catalytic activity">
    <reaction evidence="2">
        <text>Na(+)(in) = Na(+)(out)</text>
        <dbReference type="Rhea" id="RHEA:34963"/>
        <dbReference type="ChEBI" id="CHEBI:29101"/>
    </reaction>
</comment>
<comment type="activity regulation">
    <text evidence="2">Inhibited by low micromolar concentrations of Gd(3+) and high micromolar concentrations of verapamil. Insensitive to tetrodotoxin (TTX) and potentiated by low external Ca(2+) concentration.</text>
</comment>
<comment type="subunit">
    <text evidence="1 2">Found in a complex with NALCN, UNC79, UNC80 and NACL1; these auxiliary subunits are indispensable for the function of NALCN channel (By similarity). Interacts with UNC80; required for the NALCN activation/inhibition by GPCRs in neurons. Found in a complex with NALCN, UNC79 and UNC80; UNC80 bridges NALCN to UNC79. Interacts with CHRM3 (By similarity).</text>
</comment>
<comment type="subcellular location">
    <subcellularLocation>
        <location evidence="2">Cell membrane</location>
        <topology evidence="3">Multi-pass membrane protein</topology>
    </subcellularLocation>
</comment>
<comment type="tissue specificity">
    <text evidence="5">Predominantly expressed in the brain, moderately in the heart and weakly in the pancreas.</text>
</comment>
<comment type="domain">
    <text evidence="1">Contains 24 transmembrane helices (TM) that form four homologous functional repeats connected by intracellular linkers. Each of the four internal repeats contains five hydrophobic transmembrane segments (S1, S2, S3, S5, S6) and one positively charged transmembrane segment (S4). S4 segments represent the voltage-sensor. S4 transmembrane segments lack some of the charged residues (K and R) found at every third position in the S4s of the NaV, CaV, and KV channels. Pore-forming loops (P loops) between S5 and S6 of each domain form an EEKE sodium- ion selectivity filter a mixture between the EEEE found in the CaVs and the DEKA of NaVs. Voltage-sensing domains (VSDs), formed by S1 to S4 of each domain, detect changes in membrane potential and induce the opening or closing of the ion-conducting pore domain, formed by S5 and S6.</text>
</comment>
<comment type="PTM">
    <text evidence="1">Phosphorylated on tyrosine residues.</text>
</comment>
<comment type="similarity">
    <text evidence="9">Belongs to the NALCN family.</text>
</comment>
<comment type="caution">
    <text evidence="2 6">NALCN was also originally reported to be a voltage-independent, cation-nonselective channel which is permeable to sodium, potassium and calcium ions (PubMed:17448995). However, NALCN is recently reported to be selective only for monovalent cations and to be blocked by extracellular divalent cations (By similarity). Futhemore, coexpression of NALCN, UNC79, UNC80, and NALF1 results in voltage-dependent NALCN currents (By similarity).</text>
</comment>
<accession>Q6Q760</accession>
<accession>Q9Z165</accession>
<protein>
    <recommendedName>
        <fullName evidence="9">Sodium leak channel NALCN</fullName>
    </recommendedName>
    <alternativeName>
        <fullName>Four domain-type voltage-gated ion channel alpha-1 subunit</fullName>
    </alternativeName>
    <alternativeName>
        <fullName evidence="8">Rb21-channel</fullName>
    </alternativeName>
    <alternativeName>
        <fullName>Sodium leak channel non-selective protein</fullName>
    </alternativeName>
    <alternativeName>
        <fullName>Voltage gated channel-like protein 1</fullName>
    </alternativeName>
</protein>
<feature type="chain" id="PRO_0000314012" description="Sodium leak channel NALCN">
    <location>
        <begin position="1"/>
        <end position="1738"/>
    </location>
</feature>
<feature type="topological domain" description="Cytoplasmic" evidence="2">
    <location>
        <begin position="1"/>
        <end position="36"/>
    </location>
</feature>
<feature type="transmembrane region" description="Helical; Name=S1 of repeat I" evidence="2">
    <location>
        <begin position="37"/>
        <end position="57"/>
    </location>
</feature>
<feature type="topological domain" description="Extracellular" evidence="2">
    <location>
        <begin position="58"/>
        <end position="65"/>
    </location>
</feature>
<feature type="transmembrane region" description="Helical; Name=S2 of repeat I" evidence="2">
    <location>
        <begin position="66"/>
        <end position="90"/>
    </location>
</feature>
<feature type="topological domain" description="Cytoplasmic" evidence="2">
    <location>
        <begin position="91"/>
        <end position="106"/>
    </location>
</feature>
<feature type="transmembrane region" description="Helical; Name=S3 of repeat I" evidence="2">
    <location>
        <begin position="107"/>
        <end position="129"/>
    </location>
</feature>
<feature type="topological domain" description="Extracellular" evidence="2">
    <location>
        <begin position="130"/>
        <end position="137"/>
    </location>
</feature>
<feature type="transmembrane region" description="Helical; Voltage-sensor; Name=S4 of repeat I" evidence="2">
    <location>
        <begin position="138"/>
        <end position="158"/>
    </location>
</feature>
<feature type="topological domain" description="Cytoplasmic" evidence="2">
    <location>
        <begin position="159"/>
        <end position="173"/>
    </location>
</feature>
<feature type="transmembrane region" description="Helical; Name=S5 of repeat I" evidence="2">
    <location>
        <begin position="174"/>
        <end position="199"/>
    </location>
</feature>
<feature type="topological domain" description="Extracellular" evidence="2">
    <location>
        <begin position="200"/>
        <end position="269"/>
    </location>
</feature>
<feature type="intramembrane region" description="Pore-forming" evidence="2">
    <location>
        <begin position="270"/>
        <end position="289"/>
    </location>
</feature>
<feature type="topological domain" description="Extracellular" evidence="2">
    <location>
        <begin position="290"/>
        <end position="294"/>
    </location>
</feature>
<feature type="transmembrane region" description="Helical; Name=S6 of repeat I" evidence="2">
    <location>
        <begin position="295"/>
        <end position="322"/>
    </location>
</feature>
<feature type="topological domain" description="Cytoplasmic" evidence="2">
    <location>
        <begin position="323"/>
        <end position="382"/>
    </location>
</feature>
<feature type="transmembrane region" description="Helical; Name=S1 of repeat II" evidence="2">
    <location>
        <begin position="383"/>
        <end position="403"/>
    </location>
</feature>
<feature type="topological domain" description="Extracellular" evidence="2">
    <location>
        <begin position="404"/>
        <end position="416"/>
    </location>
</feature>
<feature type="transmembrane region" description="Helical; Name=S2 of repeat II" evidence="2">
    <location>
        <begin position="417"/>
        <end position="439"/>
    </location>
</feature>
<feature type="topological domain" description="Cytoplasmic" evidence="2">
    <location>
        <begin position="440"/>
        <end position="447"/>
    </location>
</feature>
<feature type="transmembrane region" description="Helical; Name=S3 of repeat II" evidence="2">
    <location>
        <begin position="448"/>
        <end position="468"/>
    </location>
</feature>
<feature type="topological domain" description="Extracellular" evidence="2">
    <location>
        <begin position="469"/>
        <end position="472"/>
    </location>
</feature>
<feature type="transmembrane region" description="Helical; Voltage-sensor; Name=S4 of repeat II" evidence="2">
    <location>
        <begin position="473"/>
        <end position="492"/>
    </location>
</feature>
<feature type="topological domain" description="Cytoplasmic" evidence="2">
    <location>
        <begin position="493"/>
        <end position="502"/>
    </location>
</feature>
<feature type="transmembrane region" description="Helical; Name=S5 of repeat II" evidence="2">
    <location>
        <begin position="503"/>
        <end position="530"/>
    </location>
</feature>
<feature type="topological domain" description="Extracellular" evidence="2">
    <location>
        <begin position="531"/>
        <end position="543"/>
    </location>
</feature>
<feature type="intramembrane region" description="Pore-forming" evidence="2">
    <location>
        <begin position="544"/>
        <end position="563"/>
    </location>
</feature>
<feature type="topological domain" description="Extracellular" evidence="2">
    <location>
        <begin position="564"/>
        <end position="569"/>
    </location>
</feature>
<feature type="transmembrane region" description="Helical; Name=S6 of repeat II" evidence="2">
    <location>
        <begin position="570"/>
        <end position="599"/>
    </location>
</feature>
<feature type="topological domain" description="Cytoplasmic" evidence="2">
    <location>
        <begin position="600"/>
        <end position="886"/>
    </location>
</feature>
<feature type="transmembrane region" description="Helical; Name=S1 of repeat III" evidence="2">
    <location>
        <begin position="887"/>
        <end position="906"/>
    </location>
</feature>
<feature type="topological domain" description="Extracellular" evidence="2">
    <location>
        <begin position="907"/>
        <end position="915"/>
    </location>
</feature>
<feature type="transmembrane region" description="Helical; Name=S2 of repeat III" evidence="2">
    <location>
        <begin position="916"/>
        <end position="939"/>
    </location>
</feature>
<feature type="topological domain" description="Cytoplasmic" evidence="2">
    <location>
        <begin position="940"/>
        <end position="947"/>
    </location>
</feature>
<feature type="transmembrane region" description="Helical; Name=S3 of repeat III" evidence="2">
    <location>
        <begin position="948"/>
        <end position="972"/>
    </location>
</feature>
<feature type="topological domain" description="Extracellular" evidence="2">
    <location>
        <begin position="973"/>
        <end position="980"/>
    </location>
</feature>
<feature type="transmembrane region" description="Helical; Voltage-sensor; Name=S4 of repeat III" evidence="2">
    <location>
        <begin position="981"/>
        <end position="1003"/>
    </location>
</feature>
<feature type="topological domain" description="Cytoplasmic" evidence="2">
    <location>
        <begin position="1004"/>
        <end position="1015"/>
    </location>
</feature>
<feature type="transmembrane region" description="Helical; Name=S5 of repeat III" evidence="2">
    <location>
        <begin position="1016"/>
        <end position="1039"/>
    </location>
</feature>
<feature type="topological domain" description="Extracellular" evidence="3">
    <location>
        <begin position="1040"/>
        <end position="1104"/>
    </location>
</feature>
<feature type="intramembrane region" description="Pore-forming" evidence="2">
    <location>
        <begin position="1105"/>
        <end position="1124"/>
    </location>
</feature>
<feature type="topological domain" description="Extracellular" evidence="2">
    <location>
        <begin position="1125"/>
        <end position="1129"/>
    </location>
</feature>
<feature type="transmembrane region" description="Helical; Name=S6 of repeat III" evidence="2">
    <location>
        <begin position="1130"/>
        <end position="1159"/>
    </location>
</feature>
<feature type="topological domain" description="Cytoplasmic" evidence="2">
    <location>
        <begin position="1160"/>
        <end position="1210"/>
    </location>
</feature>
<feature type="transmembrane region" description="Helical; Name=S1 of repeat IV" evidence="2">
    <location>
        <begin position="1211"/>
        <end position="1227"/>
    </location>
</feature>
<feature type="topological domain" description="Extracellular" evidence="2">
    <location>
        <begin position="1228"/>
        <end position="1236"/>
    </location>
</feature>
<feature type="transmembrane region" description="Helical; Name=S2 of repeat IV" evidence="2">
    <location>
        <begin position="1237"/>
        <end position="1260"/>
    </location>
</feature>
<feature type="topological domain" description="Cytoplasmic" evidence="2">
    <location>
        <begin position="1261"/>
        <end position="1271"/>
    </location>
</feature>
<feature type="transmembrane region" description="Helical; Name=S3 of repeat IV" evidence="2">
    <location>
        <begin position="1272"/>
        <end position="1293"/>
    </location>
</feature>
<feature type="topological domain" description="Extracellular" evidence="2">
    <location>
        <begin position="1294"/>
        <end position="1296"/>
    </location>
</feature>
<feature type="transmembrane region" description="Helical; Voltage-sensor; Name=S4 of repeat IV" evidence="2">
    <location>
        <begin position="1297"/>
        <end position="1318"/>
    </location>
</feature>
<feature type="topological domain" description="Cytoplasmic" evidence="2">
    <location>
        <begin position="1319"/>
        <end position="1331"/>
    </location>
</feature>
<feature type="transmembrane region" description="Helical; Name=S5 of repeat IV" evidence="2">
    <location>
        <begin position="1332"/>
        <end position="1357"/>
    </location>
</feature>
<feature type="topological domain" description="Extracellular" evidence="2">
    <location>
        <begin position="1358"/>
        <end position="1378"/>
    </location>
</feature>
<feature type="intramembrane region" description="Pore-forming" evidence="2">
    <location>
        <begin position="1379"/>
        <end position="1398"/>
    </location>
</feature>
<feature type="topological domain" description="Extracellular" evidence="2">
    <location>
        <begin position="1399"/>
        <end position="1420"/>
    </location>
</feature>
<feature type="transmembrane region" description="Helical; Name=S6 of repeat IV" evidence="2">
    <location>
        <begin position="1421"/>
        <end position="1447"/>
    </location>
</feature>
<feature type="topological domain" description="Cytoplasmic" evidence="2">
    <location>
        <begin position="1448"/>
        <end position="1738"/>
    </location>
</feature>
<feature type="region of interest" description="Disordered" evidence="4">
    <location>
        <begin position="762"/>
        <end position="789"/>
    </location>
</feature>
<feature type="region of interest" description="Disordered" evidence="4">
    <location>
        <begin position="1611"/>
        <end position="1679"/>
    </location>
</feature>
<feature type="coiled-coil region" evidence="3">
    <location>
        <begin position="795"/>
        <end position="830"/>
    </location>
</feature>
<feature type="compositionally biased region" description="Polar residues" evidence="4">
    <location>
        <begin position="1613"/>
        <end position="1631"/>
    </location>
</feature>
<feature type="compositionally biased region" description="Low complexity" evidence="4">
    <location>
        <begin position="1633"/>
        <end position="1648"/>
    </location>
</feature>
<feature type="glycosylation site" description="N-linked (GlcNAc...) asparagine" evidence="7 10">
    <location>
        <position position="210"/>
    </location>
</feature>
<feature type="glycosylation site" description="N-linked (GlcNAc...) asparagine" evidence="7 10">
    <location>
        <position position="216"/>
    </location>
</feature>
<feature type="glycosylation site" description="N-linked (GlcNAc...) asparagine" evidence="7 10">
    <location>
        <position position="1064"/>
    </location>
</feature>
<feature type="disulfide bond" evidence="7 10">
    <location>
        <begin position="207"/>
        <end position="239"/>
    </location>
</feature>
<feature type="disulfide bond" evidence="7 10">
    <location>
        <begin position="229"/>
        <end position="245"/>
    </location>
</feature>
<feature type="disulfide bond" evidence="7 10">
    <location>
        <begin position="1046"/>
        <end position="1057"/>
    </location>
</feature>
<feature type="disulfide bond" evidence="7 10">
    <location>
        <begin position="1405"/>
        <end position="1417"/>
    </location>
</feature>
<feature type="mutagenesis site" description="Affects ion seletivity." evidence="7">
    <original>E</original>
    <variation>A</variation>
    <location>
        <position position="1389"/>
    </location>
</feature>
<feature type="mutagenesis site" description="Affects ion seletivity." evidence="7">
    <original>D</original>
    <variation>A</variation>
    <location>
        <position position="1390"/>
    </location>
</feature>
<feature type="sequence conflict" description="In Ref. 1; AAC68885." evidence="9" ref="1">
    <original>P</original>
    <variation>S</variation>
    <location>
        <position position="52"/>
    </location>
</feature>
<feature type="sequence conflict" description="In Ref. 1; AAC68885." evidence="9" ref="1">
    <original>T</original>
    <variation>A</variation>
    <location>
        <position position="748"/>
    </location>
</feature>
<feature type="sequence conflict" description="In Ref. 1; AAC68885." evidence="9" ref="1">
    <original>KREGVI</original>
    <variation>NERCD</variation>
    <location>
        <begin position="1480"/>
        <end position="1485"/>
    </location>
</feature>
<feature type="strand" evidence="11">
    <location>
        <begin position="33"/>
        <end position="35"/>
    </location>
</feature>
<feature type="helix" evidence="11">
    <location>
        <begin position="36"/>
        <end position="54"/>
    </location>
</feature>
<feature type="helix" evidence="11">
    <location>
        <begin position="58"/>
        <end position="63"/>
    </location>
</feature>
<feature type="helix" evidence="11">
    <location>
        <begin position="65"/>
        <end position="90"/>
    </location>
</feature>
<feature type="helix" evidence="11">
    <location>
        <begin position="108"/>
        <end position="129"/>
    </location>
</feature>
<feature type="strand" evidence="11">
    <location>
        <begin position="135"/>
        <end position="137"/>
    </location>
</feature>
<feature type="helix" evidence="11">
    <location>
        <begin position="138"/>
        <end position="143"/>
    </location>
</feature>
<feature type="helix" evidence="11">
    <location>
        <begin position="146"/>
        <end position="149"/>
    </location>
</feature>
<feature type="helix" evidence="11">
    <location>
        <begin position="150"/>
        <end position="154"/>
    </location>
</feature>
<feature type="helix" evidence="11">
    <location>
        <begin position="155"/>
        <end position="157"/>
    </location>
</feature>
<feature type="helix" evidence="11">
    <location>
        <begin position="164"/>
        <end position="199"/>
    </location>
</feature>
<feature type="strand" evidence="11">
    <location>
        <begin position="206"/>
        <end position="210"/>
    </location>
</feature>
<feature type="turn" evidence="11">
    <location>
        <begin position="219"/>
        <end position="221"/>
    </location>
</feature>
<feature type="strand" evidence="12">
    <location>
        <begin position="231"/>
        <end position="236"/>
    </location>
</feature>
<feature type="strand" evidence="11">
    <location>
        <begin position="243"/>
        <end position="246"/>
    </location>
</feature>
<feature type="helix" evidence="12">
    <location>
        <begin position="255"/>
        <end position="258"/>
    </location>
</feature>
<feature type="helix" evidence="11">
    <location>
        <begin position="266"/>
        <end position="277"/>
    </location>
</feature>
<feature type="helix" evidence="11">
    <location>
        <begin position="282"/>
        <end position="292"/>
    </location>
</feature>
<feature type="helix" evidence="11">
    <location>
        <begin position="295"/>
        <end position="308"/>
    </location>
</feature>
<feature type="turn" evidence="11">
    <location>
        <begin position="309"/>
        <end position="311"/>
    </location>
</feature>
<feature type="helix" evidence="11">
    <location>
        <begin position="312"/>
        <end position="335"/>
    </location>
</feature>
<feature type="strand" evidence="12">
    <location>
        <begin position="350"/>
        <end position="353"/>
    </location>
</feature>
<feature type="strand" evidence="12">
    <location>
        <begin position="359"/>
        <end position="362"/>
    </location>
</feature>
<feature type="helix" evidence="11">
    <location>
        <begin position="377"/>
        <end position="382"/>
    </location>
</feature>
<feature type="helix" evidence="11">
    <location>
        <begin position="384"/>
        <end position="402"/>
    </location>
</feature>
<feature type="strand" evidence="11">
    <location>
        <begin position="413"/>
        <end position="416"/>
    </location>
</feature>
<feature type="helix" evidence="11">
    <location>
        <begin position="417"/>
        <end position="440"/>
    </location>
</feature>
<feature type="helix" evidence="11">
    <location>
        <begin position="442"/>
        <end position="446"/>
    </location>
</feature>
<feature type="helix" evidence="11">
    <location>
        <begin position="451"/>
        <end position="465"/>
    </location>
</feature>
<feature type="turn" evidence="12">
    <location>
        <begin position="467"/>
        <end position="471"/>
    </location>
</feature>
<feature type="helix" evidence="11">
    <location>
        <begin position="475"/>
        <end position="480"/>
    </location>
</feature>
<feature type="helix" evidence="11">
    <location>
        <begin position="481"/>
        <end position="488"/>
    </location>
</feature>
<feature type="helix" evidence="11">
    <location>
        <begin position="490"/>
        <end position="500"/>
    </location>
</feature>
<feature type="turn" evidence="11">
    <location>
        <begin position="503"/>
        <end position="505"/>
    </location>
</feature>
<feature type="helix" evidence="11">
    <location>
        <begin position="506"/>
        <end position="528"/>
    </location>
</feature>
<feature type="strand" evidence="11">
    <location>
        <begin position="529"/>
        <end position="531"/>
    </location>
</feature>
<feature type="strand" evidence="11">
    <location>
        <begin position="537"/>
        <end position="539"/>
    </location>
</feature>
<feature type="helix" evidence="11">
    <location>
        <begin position="540"/>
        <end position="552"/>
    </location>
</feature>
<feature type="helix" evidence="11">
    <location>
        <begin position="556"/>
        <end position="567"/>
    </location>
</feature>
<feature type="strand" evidence="11">
    <location>
        <begin position="569"/>
        <end position="571"/>
    </location>
</feature>
<feature type="helix" evidence="11">
    <location>
        <begin position="572"/>
        <end position="602"/>
    </location>
</feature>
<feature type="helix" evidence="11">
    <location>
        <begin position="606"/>
        <end position="614"/>
    </location>
</feature>
<feature type="helix" evidence="12">
    <location>
        <begin position="660"/>
        <end position="668"/>
    </location>
</feature>
<feature type="helix" evidence="12">
    <location>
        <begin position="704"/>
        <end position="717"/>
    </location>
</feature>
<feature type="helix" evidence="12">
    <location>
        <begin position="719"/>
        <end position="739"/>
    </location>
</feature>
<feature type="helix" evidence="11">
    <location>
        <begin position="753"/>
        <end position="763"/>
    </location>
</feature>
<feature type="helix" evidence="11">
    <location>
        <begin position="847"/>
        <end position="853"/>
    </location>
</feature>
<feature type="helix" evidence="11">
    <location>
        <begin position="876"/>
        <end position="882"/>
    </location>
</feature>
<feature type="helix" evidence="11">
    <location>
        <begin position="887"/>
        <end position="903"/>
    </location>
</feature>
<feature type="strand" evidence="11">
    <location>
        <begin position="908"/>
        <end position="910"/>
    </location>
</feature>
<feature type="turn" evidence="11">
    <location>
        <begin position="912"/>
        <end position="914"/>
    </location>
</feature>
<feature type="helix" evidence="11">
    <location>
        <begin position="916"/>
        <end position="940"/>
    </location>
</feature>
<feature type="strand" evidence="11">
    <location>
        <begin position="942"/>
        <end position="945"/>
    </location>
</feature>
<feature type="strand" evidence="11">
    <location>
        <begin position="949"/>
        <end position="952"/>
    </location>
</feature>
<feature type="helix" evidence="11">
    <location>
        <begin position="953"/>
        <end position="971"/>
    </location>
</feature>
<feature type="helix" evidence="11">
    <location>
        <begin position="981"/>
        <end position="989"/>
    </location>
</feature>
<feature type="helix" evidence="11">
    <location>
        <begin position="990"/>
        <end position="995"/>
    </location>
</feature>
<feature type="helix" evidence="11">
    <location>
        <begin position="996"/>
        <end position="999"/>
    </location>
</feature>
<feature type="helix" evidence="11">
    <location>
        <begin position="1001"/>
        <end position="1011"/>
    </location>
</feature>
<feature type="helix" evidence="11">
    <location>
        <begin position="1014"/>
        <end position="1039"/>
    </location>
</feature>
<feature type="strand" evidence="11">
    <location>
        <begin position="1045"/>
        <end position="1048"/>
    </location>
</feature>
<feature type="helix" evidence="12">
    <location>
        <begin position="1054"/>
        <end position="1056"/>
    </location>
</feature>
<feature type="strand" evidence="11">
    <location>
        <begin position="1059"/>
        <end position="1065"/>
    </location>
</feature>
<feature type="strand" evidence="11">
    <location>
        <begin position="1082"/>
        <end position="1087"/>
    </location>
</feature>
<feature type="helix" evidence="11">
    <location>
        <begin position="1101"/>
        <end position="1112"/>
    </location>
</feature>
<feature type="helix" evidence="11">
    <location>
        <begin position="1117"/>
        <end position="1127"/>
    </location>
</feature>
<feature type="helix" evidence="11">
    <location>
        <begin position="1130"/>
        <end position="1132"/>
    </location>
</feature>
<feature type="helix" evidence="11">
    <location>
        <begin position="1133"/>
        <end position="1143"/>
    </location>
</feature>
<feature type="turn" evidence="11">
    <location>
        <begin position="1144"/>
        <end position="1146"/>
    </location>
</feature>
<feature type="helix" evidence="11">
    <location>
        <begin position="1147"/>
        <end position="1162"/>
    </location>
</feature>
<feature type="turn" evidence="11">
    <location>
        <begin position="1163"/>
        <end position="1166"/>
    </location>
</feature>
<feature type="helix" evidence="11">
    <location>
        <begin position="1170"/>
        <end position="1182"/>
    </location>
</feature>
<feature type="helix" evidence="11">
    <location>
        <begin position="1198"/>
        <end position="1207"/>
    </location>
</feature>
<feature type="helix" evidence="11">
    <location>
        <begin position="1210"/>
        <end position="1225"/>
    </location>
</feature>
<feature type="helix" evidence="11">
    <location>
        <begin position="1238"/>
        <end position="1262"/>
    </location>
</feature>
<feature type="helix" evidence="11">
    <location>
        <begin position="1265"/>
        <end position="1268"/>
    </location>
</feature>
<feature type="helix" evidence="11">
    <location>
        <begin position="1272"/>
        <end position="1293"/>
    </location>
</feature>
<feature type="helix" evidence="11">
    <location>
        <begin position="1297"/>
        <end position="1313"/>
    </location>
</feature>
<feature type="helix" evidence="11">
    <location>
        <begin position="1314"/>
        <end position="1317"/>
    </location>
</feature>
<feature type="helix" evidence="11">
    <location>
        <begin position="1319"/>
        <end position="1334"/>
    </location>
</feature>
<feature type="helix" evidence="11">
    <location>
        <begin position="1336"/>
        <end position="1357"/>
    </location>
</feature>
<feature type="strand" evidence="11">
    <location>
        <begin position="1367"/>
        <end position="1370"/>
    </location>
</feature>
<feature type="strand" evidence="12">
    <location>
        <begin position="1372"/>
        <end position="1374"/>
    </location>
</feature>
<feature type="helix" evidence="11">
    <location>
        <begin position="1375"/>
        <end position="1386"/>
    </location>
</feature>
<feature type="helix" evidence="11">
    <location>
        <begin position="1391"/>
        <end position="1397"/>
    </location>
</feature>
<feature type="helix" evidence="11">
    <location>
        <begin position="1412"/>
        <end position="1414"/>
    </location>
</feature>
<feature type="helix" evidence="11">
    <location>
        <begin position="1420"/>
        <end position="1436"/>
    </location>
</feature>
<feature type="helix" evidence="11">
    <location>
        <begin position="1439"/>
        <end position="1453"/>
    </location>
</feature>
<feature type="strand" evidence="11">
    <location>
        <begin position="1459"/>
        <end position="1461"/>
    </location>
</feature>
<feature type="helix" evidence="11">
    <location>
        <begin position="1464"/>
        <end position="1477"/>
    </location>
</feature>
<feature type="strand" evidence="11">
    <location>
        <begin position="1478"/>
        <end position="1480"/>
    </location>
</feature>
<feature type="helix" evidence="11">
    <location>
        <begin position="1488"/>
        <end position="1496"/>
    </location>
</feature>
<feature type="helix" evidence="11">
    <location>
        <begin position="1499"/>
        <end position="1501"/>
    </location>
</feature>
<feature type="turn" evidence="11">
    <location>
        <begin position="1505"/>
        <end position="1507"/>
    </location>
</feature>
<feature type="helix" evidence="11">
    <location>
        <begin position="1509"/>
        <end position="1521"/>
    </location>
</feature>
<feature type="turn" evidence="11">
    <location>
        <begin position="1522"/>
        <end position="1524"/>
    </location>
</feature>
<feature type="helix" evidence="11">
    <location>
        <begin position="1532"/>
        <end position="1540"/>
    </location>
</feature>
<feature type="helix" evidence="11">
    <location>
        <begin position="1544"/>
        <end position="1547"/>
    </location>
</feature>
<feature type="helix" evidence="11">
    <location>
        <begin position="1550"/>
        <end position="1577"/>
    </location>
</feature>
<evidence type="ECO:0000250" key="1">
    <source>
        <dbReference type="UniProtKB" id="Q8BXR5"/>
    </source>
</evidence>
<evidence type="ECO:0000250" key="2">
    <source>
        <dbReference type="UniProtKB" id="Q8IZF0"/>
    </source>
</evidence>
<evidence type="ECO:0000255" key="3"/>
<evidence type="ECO:0000256" key="4">
    <source>
        <dbReference type="SAM" id="MobiDB-lite"/>
    </source>
</evidence>
<evidence type="ECO:0000269" key="5">
    <source>
    </source>
</evidence>
<evidence type="ECO:0000269" key="6">
    <source>
    </source>
</evidence>
<evidence type="ECO:0000269" key="7">
    <source>
    </source>
</evidence>
<evidence type="ECO:0000303" key="8">
    <source>
    </source>
</evidence>
<evidence type="ECO:0000305" key="9"/>
<evidence type="ECO:0007744" key="10">
    <source>
        <dbReference type="PDB" id="7CU3"/>
    </source>
</evidence>
<evidence type="ECO:0007829" key="11">
    <source>
        <dbReference type="PDB" id="7CU3"/>
    </source>
</evidence>
<evidence type="ECO:0007829" key="12">
    <source>
        <dbReference type="PDB" id="7W7G"/>
    </source>
</evidence>
<name>NALCN_RAT</name>
<reference key="1">
    <citation type="journal article" date="1999" name="FEBS Lett.">
        <title>Cloning of a novel four repeat protein related to voltage-gated sodium and calcium channels.</title>
        <authorList>
            <person name="Lee J.-H."/>
            <person name="Cribbs L.L."/>
            <person name="Perez-Reyes E."/>
        </authorList>
    </citation>
    <scope>NUCLEOTIDE SEQUENCE [MRNA]</scope>
    <scope>TISSUE SPECIFICITY</scope>
    <source>
        <strain>Sprague-Dawley</strain>
        <tissue>Brain</tissue>
    </source>
</reference>
<reference key="2">
    <citation type="submission" date="2004-02" db="EMBL/GenBank/DDBJ databases">
        <title>Member of a novel family of four domain-type voltage-gated ion channel in Rattus norvegicus.</title>
        <authorList>
            <person name="Hamming K.S."/>
            <person name="Snutch T.P."/>
        </authorList>
    </citation>
    <scope>NUCLEOTIDE SEQUENCE [MRNA]</scope>
    <source>
        <strain>Sprague-Dawley</strain>
    </source>
</reference>
<reference key="3">
    <citation type="journal article" date="2007" name="Cell">
        <title>The neuronal channel NALCN contributes resting sodium permeability and is required for normal respiratory rhythm.</title>
        <authorList>
            <person name="Lu B."/>
            <person name="Su Y."/>
            <person name="Das S."/>
            <person name="Liu J."/>
            <person name="Xia J."/>
            <person name="Ren D."/>
        </authorList>
    </citation>
    <scope>FUNCTION</scope>
</reference>
<reference key="4">
    <citation type="journal article" date="2012" name="Nat. Commun.">
        <title>Quantitative maps of protein phosphorylation sites across 14 different rat organs and tissues.</title>
        <authorList>
            <person name="Lundby A."/>
            <person name="Secher A."/>
            <person name="Lage K."/>
            <person name="Nordsborg N.B."/>
            <person name="Dmytriyev A."/>
            <person name="Lundby C."/>
            <person name="Olsen J.V."/>
        </authorList>
    </citation>
    <scope>IDENTIFICATION BY MASS SPECTROMETRY [LARGE SCALE ANALYSIS]</scope>
</reference>
<reference evidence="10" key="5">
    <citation type="journal article" date="2020" name="Nat. Commun.">
        <title>Structure of voltage-modulated sodium-selective NALCN-FAM155A channel complex.</title>
        <authorList>
            <person name="Kang Y."/>
            <person name="Wu J.X."/>
            <person name="Chen L."/>
        </authorList>
    </citation>
    <scope>STRUCTURE BY ELECTRON MICROSCOPY (2.65 ANGSTROMS) IN COMPLEX WITH MOUSE NALF1</scope>
    <scope>DISULFIDE BOND</scope>
    <scope>GLYCOSYLATION AT ASN-210; ASN-216 AND ASN-1064</scope>
    <scope>MUTAGENESIS OF GLU-1389 AND ASP-1390</scope>
</reference>
<organism>
    <name type="scientific">Rattus norvegicus</name>
    <name type="common">Rat</name>
    <dbReference type="NCBI Taxonomy" id="10116"/>
    <lineage>
        <taxon>Eukaryota</taxon>
        <taxon>Metazoa</taxon>
        <taxon>Chordata</taxon>
        <taxon>Craniata</taxon>
        <taxon>Vertebrata</taxon>
        <taxon>Euteleostomi</taxon>
        <taxon>Mammalia</taxon>
        <taxon>Eutheria</taxon>
        <taxon>Euarchontoglires</taxon>
        <taxon>Glires</taxon>
        <taxon>Rodentia</taxon>
        <taxon>Myomorpha</taxon>
        <taxon>Muroidea</taxon>
        <taxon>Muridae</taxon>
        <taxon>Murinae</taxon>
        <taxon>Rattus</taxon>
    </lineage>
</organism>
<gene>
    <name type="primary">Nalcn</name>
    <name type="synonym">Nca</name>
    <name evidence="8" type="synonym">Rb21</name>
    <name type="synonym">Vgcnl1</name>
</gene>
<dbReference type="EMBL" id="AF078779">
    <property type="protein sequence ID" value="AAC68885.1"/>
    <property type="molecule type" value="mRNA"/>
</dbReference>
<dbReference type="EMBL" id="AY555273">
    <property type="protein sequence ID" value="AAS65873.1"/>
    <property type="molecule type" value="mRNA"/>
</dbReference>
<dbReference type="PIR" id="T17101">
    <property type="entry name" value="T17101"/>
</dbReference>
<dbReference type="RefSeq" id="NP_705894.1">
    <property type="nucleotide sequence ID" value="NM_153630.1"/>
</dbReference>
<dbReference type="PDB" id="7CU3">
    <property type="method" value="EM"/>
    <property type="resolution" value="2.65 A"/>
    <property type="chains" value="A=1-1738"/>
</dbReference>
<dbReference type="PDB" id="7W7G">
    <property type="method" value="EM"/>
    <property type="resolution" value="3.20 A"/>
    <property type="chains" value="C=1-1738"/>
</dbReference>
<dbReference type="PDBsum" id="7CU3"/>
<dbReference type="PDBsum" id="7W7G"/>
<dbReference type="EMDB" id="EMD-30470"/>
<dbReference type="EMDB" id="EMD-32344"/>
<dbReference type="SMR" id="Q6Q760"/>
<dbReference type="FunCoup" id="Q6Q760">
    <property type="interactions" value="440"/>
</dbReference>
<dbReference type="STRING" id="10116.ENSRNOP00000054214"/>
<dbReference type="GlyCosmos" id="Q6Q760">
    <property type="glycosylation" value="3 sites, No reported glycans"/>
</dbReference>
<dbReference type="GlyGen" id="Q6Q760">
    <property type="glycosylation" value="3 sites"/>
</dbReference>
<dbReference type="iPTMnet" id="Q6Q760"/>
<dbReference type="PhosphoSitePlus" id="Q6Q760"/>
<dbReference type="PaxDb" id="10116-ENSRNOP00000054214"/>
<dbReference type="ABCD" id="Q6Q760">
    <property type="antibodies" value="1 sequenced antibody"/>
</dbReference>
<dbReference type="AGR" id="RGD:628710"/>
<dbReference type="RGD" id="628710">
    <property type="gene designation" value="Nalcn"/>
</dbReference>
<dbReference type="eggNOG" id="KOG2301">
    <property type="taxonomic scope" value="Eukaryota"/>
</dbReference>
<dbReference type="InParanoid" id="Q6Q760"/>
<dbReference type="PhylomeDB" id="Q6Q760"/>
<dbReference type="Reactome" id="R-RNO-2672351">
    <property type="pathway name" value="Stimuli-sensing channels"/>
</dbReference>
<dbReference type="PRO" id="PR:Q6Q760"/>
<dbReference type="Proteomes" id="UP000002494">
    <property type="component" value="Unplaced"/>
</dbReference>
<dbReference type="GO" id="GO:0034702">
    <property type="term" value="C:monoatomic ion channel complex"/>
    <property type="evidence" value="ECO:0007669"/>
    <property type="project" value="UniProtKB-KW"/>
</dbReference>
<dbReference type="GO" id="GO:0005886">
    <property type="term" value="C:plasma membrane"/>
    <property type="evidence" value="ECO:0000266"/>
    <property type="project" value="RGD"/>
</dbReference>
<dbReference type="GO" id="GO:0022840">
    <property type="term" value="F:leak channel activity"/>
    <property type="evidence" value="ECO:0000250"/>
    <property type="project" value="UniProtKB"/>
</dbReference>
<dbReference type="GO" id="GO:0005261">
    <property type="term" value="F:monoatomic cation channel activity"/>
    <property type="evidence" value="ECO:0000250"/>
    <property type="project" value="UniProtKB"/>
</dbReference>
<dbReference type="GO" id="GO:0005248">
    <property type="term" value="F:voltage-gated sodium channel activity"/>
    <property type="evidence" value="ECO:0000250"/>
    <property type="project" value="UniProtKB"/>
</dbReference>
<dbReference type="GO" id="GO:0070588">
    <property type="term" value="P:calcium ion transmembrane transport"/>
    <property type="evidence" value="ECO:0000250"/>
    <property type="project" value="UniProtKB"/>
</dbReference>
<dbReference type="GO" id="GO:0032224">
    <property type="term" value="P:positive regulation of synaptic transmission, cholinergic"/>
    <property type="evidence" value="ECO:0000318"/>
    <property type="project" value="GO_Central"/>
</dbReference>
<dbReference type="GO" id="GO:0032230">
    <property type="term" value="P:positive regulation of synaptic transmission, GABAergic"/>
    <property type="evidence" value="ECO:0000318"/>
    <property type="project" value="GO_Central"/>
</dbReference>
<dbReference type="GO" id="GO:0071805">
    <property type="term" value="P:potassium ion transmembrane transport"/>
    <property type="evidence" value="ECO:0000250"/>
    <property type="project" value="UniProtKB"/>
</dbReference>
<dbReference type="GO" id="GO:0060075">
    <property type="term" value="P:regulation of resting membrane potential"/>
    <property type="evidence" value="ECO:0000250"/>
    <property type="project" value="UniProtKB"/>
</dbReference>
<dbReference type="GO" id="GO:0035725">
    <property type="term" value="P:sodium ion transmembrane transport"/>
    <property type="evidence" value="ECO:0000250"/>
    <property type="project" value="UniProtKB"/>
</dbReference>
<dbReference type="FunFam" id="1.10.238.10:FF:000080">
    <property type="entry name" value="Sodium leak channel non-selective protein"/>
    <property type="match status" value="1"/>
</dbReference>
<dbReference type="FunFam" id="1.10.287.70:FF:000060">
    <property type="entry name" value="Sodium leak channel non-selective protein"/>
    <property type="match status" value="1"/>
</dbReference>
<dbReference type="FunFam" id="1.10.287.70:FF:000061">
    <property type="entry name" value="Sodium leak channel non-selective protein"/>
    <property type="match status" value="1"/>
</dbReference>
<dbReference type="FunFam" id="1.10.287.70:FF:000066">
    <property type="entry name" value="Sodium leak channel non-selective protein"/>
    <property type="match status" value="1"/>
</dbReference>
<dbReference type="FunFam" id="1.20.120.350:FF:000032">
    <property type="entry name" value="Sodium leak channel non-selective protein"/>
    <property type="match status" value="1"/>
</dbReference>
<dbReference type="FunFam" id="1.20.120.350:FF:000034">
    <property type="entry name" value="Sodium leak channel non-selective protein"/>
    <property type="match status" value="1"/>
</dbReference>
<dbReference type="FunFam" id="1.20.120.350:FF:000038">
    <property type="entry name" value="Sodium leak channel non-selective protein"/>
    <property type="match status" value="1"/>
</dbReference>
<dbReference type="FunFam" id="1.10.287.70:FF:000065">
    <property type="entry name" value="sodium leak channel non-selective protein"/>
    <property type="match status" value="1"/>
</dbReference>
<dbReference type="FunFam" id="1.20.120.350:FF:000030">
    <property type="entry name" value="sodium leak channel non-selective protein"/>
    <property type="match status" value="1"/>
</dbReference>
<dbReference type="Gene3D" id="1.10.287.70">
    <property type="match status" value="4"/>
</dbReference>
<dbReference type="Gene3D" id="1.10.238.10">
    <property type="entry name" value="EF-hand"/>
    <property type="match status" value="1"/>
</dbReference>
<dbReference type="Gene3D" id="1.20.120.350">
    <property type="entry name" value="Voltage-gated potassium channels. Chain C"/>
    <property type="match status" value="4"/>
</dbReference>
<dbReference type="InterPro" id="IPR005821">
    <property type="entry name" value="Ion_trans_dom"/>
</dbReference>
<dbReference type="InterPro" id="IPR028823">
    <property type="entry name" value="NALCN"/>
</dbReference>
<dbReference type="InterPro" id="IPR027359">
    <property type="entry name" value="Volt_channel_dom_sf"/>
</dbReference>
<dbReference type="PANTHER" id="PTHR46141:SF1">
    <property type="entry name" value="SODIUM LEAK CHANNEL NALCN"/>
    <property type="match status" value="1"/>
</dbReference>
<dbReference type="PANTHER" id="PTHR46141">
    <property type="entry name" value="SODIUM LEAK CHANNEL NON-SELECTIVE PROTEIN"/>
    <property type="match status" value="1"/>
</dbReference>
<dbReference type="Pfam" id="PF00520">
    <property type="entry name" value="Ion_trans"/>
    <property type="match status" value="4"/>
</dbReference>
<dbReference type="SUPFAM" id="SSF81324">
    <property type="entry name" value="Voltage-gated potassium channels"/>
    <property type="match status" value="4"/>
</dbReference>
<keyword id="KW-0002">3D-structure</keyword>
<keyword id="KW-1003">Cell membrane</keyword>
<keyword id="KW-0175">Coiled coil</keyword>
<keyword id="KW-1015">Disulfide bond</keyword>
<keyword id="KW-0325">Glycoprotein</keyword>
<keyword id="KW-0407">Ion channel</keyword>
<keyword id="KW-0406">Ion transport</keyword>
<keyword id="KW-0472">Membrane</keyword>
<keyword id="KW-0597">Phosphoprotein</keyword>
<keyword id="KW-1185">Reference proteome</keyword>
<keyword id="KW-0677">Repeat</keyword>
<keyword id="KW-0915">Sodium</keyword>
<keyword id="KW-0894">Sodium channel</keyword>
<keyword id="KW-0739">Sodium transport</keyword>
<keyword id="KW-0812">Transmembrane</keyword>
<keyword id="KW-1133">Transmembrane helix</keyword>
<keyword id="KW-0813">Transport</keyword>
<keyword id="KW-0851">Voltage-gated channel</keyword>
<sequence>MLKRKQSSRVEAQPVTDFGPDESLSDNADILWINKPWVHSLLRICAIISVIPVCMNTPMTFEHYPPLQYVTFTLDTLLMFLYTAEMIAKMHIRGIVKGDSSYVKDRWCVFDGFMVFCLWVSLVLQVFEIADIVDQMSPWGMLRIPRPLIMIRAFRIYFRFELPRTRITNILKRSGEQIWSVSIFLLFFLLLYGILGVQMFGTFTYHCVVNDTKPGNVTWNSLAIPDTHCSPELEEGYQCPPGFKCMDLEDLGLSRQELGYSGFNEIGTSIFTVYEASSQEGWVFLMYRAIDSFPRWRSYFYFITLIFFLAWLVKNVFIAVIIETFAEIRVQFQQMWGTRSSTTSTATTQMFHEDAAGGWQLVAVDVNKPQGRAPACLQKMMRSSVFHMFILSMVTVDVIVAASNYYKGENFRRQYDEFYLAEVAFTVLFDLEALLKIWCLGFTGYISSSLHKFELLLVIGTTLHVYPDLYHSQFTYFQVLRVVRLIKISPALEDFVYKIFGPGKKLGSLVVFTASLLIVMSAISLQMFCFVEELDRFTTFPRAFMSMFQILTQEGWVDVMDQTLNAVGHMWAPLVAIYFILYHLFATLILLSLFVAVILDNLELDEDLKKLKQLKQSEANADTKEKLPLRLRIFEKFPNRPQMVKISKLPSDFTVPKIRESFMKQFIDRQQQDTCCLFRILPSTSSSSCDNPKRPTVEDNKYIDQKLRKSVFSIRARNLLEKETAVTKILRACTRQRMLSGSFEGQPTKERSILSVQHHIRQERRSLRHGSNSQRISRGKSLETLTQDHSNTVRYRNAQREDSEIKMIQEKKEQAEMKRKVQEEELRENHPYFDKPLFIVGREHRFRNFCRVVVRARFNASKTDPVTGAVKNTKYHQLYDLLGLVTYLDWVMITVTICSCISMMFESPFRRVMHAPTLQIAEYVFVIFMSIELNLKIMADGLFFTPTAVIRDFGGVMDIFIYLVSLIFLCWMPQNVPAESGAQLLMVLRCLRPLRIFKLVPQMRKVVRELFSGFKEIFLVSILLLTLMLVFASFGVQLFAGKLAKCNDPNIIRREDCNGIFRINVSVSKNLNLKLRPGEKKPGFWVPRVWANPRNFNFDNVGNAMLALFEVLSLKGWVEVRDVIIHRVGPIHGIYIHVFVFLGCMIGLTLFVGVVIANFNENKGTALLTVDQRRWEDLKSRLKIAQPLHLPPRPDNDGFRAKMYDITQHPFFKRTIALLVLAQSVLLSVKWDVEDPVTVPLATMSVVFTFIFVLEVTMKIIAMSPAGFWQSRRNRYDLLVTSLGVVWVVLHFALLNAYTYMMGACVIVFRFFSICGKHVTLKMLLLTVVVSMYKSFFIIVGMFLLLLCYAFAGVVLFGTVKYGENINRHANFSSAGKAITVLFRIVTGEDWNKIMHDCMVQPPFCTPDEFTYWATDCGNYAGALMYFCSFYVIIAYIMLNLLVAIIVENFSLFYSTEEDQLLSYNDLRHFQIIWNMVDDKREGVIPTFRVKFLLRLLRGRLEVDLDKDKLLFKHMCYEMERLHNGGDVTFHDVLSMLSYRSVDIRKSLQLEELLAREQLEYTIEEEVAKQTIRMWLKKCLKRIRAKQQQSCSIIHSLRESQQQELSRFLNPPSIETTQPSEDTNANSQDHNTQPESSSQQQLLSPTLSDRGGSRQDAADTGKPQRKIGQWRLPSAPKPISHSVSSVNLRFGGRTTMKSVVCKMNPMPDTASCGSEVKKWWTRQLTVESDESGDDLLDI</sequence>